<name>KLK2_RAT</name>
<keyword id="KW-0002">3D-structure</keyword>
<keyword id="KW-0903">Direct protein sequencing</keyword>
<keyword id="KW-1015">Disulfide bond</keyword>
<keyword id="KW-0325">Glycoprotein</keyword>
<keyword id="KW-0378">Hydrolase</keyword>
<keyword id="KW-0479">Metal-binding</keyword>
<keyword id="KW-0645">Protease</keyword>
<keyword id="KW-1185">Reference proteome</keyword>
<keyword id="KW-0720">Serine protease</keyword>
<keyword id="KW-0732">Signal</keyword>
<keyword id="KW-0862">Zinc</keyword>
<keyword id="KW-0865">Zymogen</keyword>
<sequence length="259" mass="28248">MWLQILSLVLSVGRIDAAPPGQSRIVGGYKCEKNSQPWQVAVINEYLCGGVLIDPSWVITAAHCYSNNYQVLLGRNNLFKDEPFAQRRLVRQSFRHPDYIPLIVTNDTEQPVHDHSNDLMLLHLSEPADITGGVKVIDLPTKEPKVGSTCLASGWGSTNPSEMVVSHDLQCVNIHLLSNEKCIETYKDNVTDVMLCAGEMEGGKDTCAGDSGGPLICDGVLQGITSGGATPCAKPKTPAIYAKLIKFTSWIKKVMKENP</sequence>
<dbReference type="EC" id="3.4.21.35"/>
<dbReference type="EMBL" id="M11565">
    <property type="protein sequence ID" value="AAA41466.1"/>
    <property type="molecule type" value="mRNA"/>
</dbReference>
<dbReference type="EMBL" id="M23878">
    <property type="protein sequence ID" value="AAA42259.1"/>
    <property type="molecule type" value="Genomic_DNA"/>
</dbReference>
<dbReference type="EMBL" id="M23877">
    <property type="protein sequence ID" value="AAA42259.1"/>
    <property type="status" value="JOINED"/>
    <property type="molecule type" value="Genomic_DNA"/>
</dbReference>
<dbReference type="EMBL" id="M26533">
    <property type="protein sequence ID" value="AAA42081.1"/>
    <property type="molecule type" value="Genomic_DNA"/>
</dbReference>
<dbReference type="PIR" id="B33359">
    <property type="entry name" value="KQRTTN"/>
</dbReference>
<dbReference type="RefSeq" id="NP_036809.1">
    <property type="nucleotide sequence ID" value="NM_012677.1"/>
</dbReference>
<dbReference type="PDB" id="1TON">
    <property type="method" value="X-ray"/>
    <property type="resolution" value="1.80 A"/>
    <property type="chains" value="A=25-259"/>
</dbReference>
<dbReference type="PDBsum" id="1TON"/>
<dbReference type="SMR" id="P00759"/>
<dbReference type="FunCoup" id="P00759">
    <property type="interactions" value="82"/>
</dbReference>
<dbReference type="STRING" id="10116.ENSRNOP00000025701"/>
<dbReference type="MEROPS" id="S01.172"/>
<dbReference type="GlyCosmos" id="P00759">
    <property type="glycosylation" value="2 sites, No reported glycans"/>
</dbReference>
<dbReference type="GlyGen" id="P00759">
    <property type="glycosylation" value="2 sites"/>
</dbReference>
<dbReference type="iPTMnet" id="P00759"/>
<dbReference type="PhosphoSitePlus" id="P00759"/>
<dbReference type="PaxDb" id="10116-ENSRNOP00000025701"/>
<dbReference type="Ensembl" id="ENSRNOT00000107012.1">
    <property type="protein sequence ID" value="ENSRNOP00000081904.1"/>
    <property type="gene ID" value="ENSRNOG00000068685.1"/>
</dbReference>
<dbReference type="GeneID" id="24841"/>
<dbReference type="KEGG" id="rno:24841"/>
<dbReference type="UCSC" id="RGD:3888">
    <property type="organism name" value="rat"/>
</dbReference>
<dbReference type="AGR" id="RGD:3888"/>
<dbReference type="CTD" id="24841"/>
<dbReference type="RGD" id="3888">
    <property type="gene designation" value="Ton"/>
</dbReference>
<dbReference type="eggNOG" id="KOG3627">
    <property type="taxonomic scope" value="Eukaryota"/>
</dbReference>
<dbReference type="GeneTree" id="ENSGT01020000230389"/>
<dbReference type="HOGENOM" id="CLU_006842_1_1_1"/>
<dbReference type="InParanoid" id="P00759"/>
<dbReference type="OrthoDB" id="63297at9989"/>
<dbReference type="PhylomeDB" id="P00759"/>
<dbReference type="TreeFam" id="TF331065"/>
<dbReference type="Reactome" id="R-RNO-1592389">
    <property type="pathway name" value="Activation of Matrix Metalloproteinases"/>
</dbReference>
<dbReference type="Reactome" id="R-RNO-381426">
    <property type="pathway name" value="Regulation of Insulin-like Growth Factor (IGF) transport and uptake by Insulin-like Growth Factor Binding Proteins (IGFBPs)"/>
</dbReference>
<dbReference type="EvolutionaryTrace" id="P00759"/>
<dbReference type="PRO" id="PR:P00759"/>
<dbReference type="Proteomes" id="UP000002494">
    <property type="component" value="Chromosome 1"/>
</dbReference>
<dbReference type="Bgee" id="ENSRNOG00000029237">
    <property type="expression patterns" value="Expressed in thymus and 3 other cell types or tissues"/>
</dbReference>
<dbReference type="ExpressionAtlas" id="P00759">
    <property type="expression patterns" value="baseline"/>
</dbReference>
<dbReference type="GO" id="GO:0005615">
    <property type="term" value="C:extracellular space"/>
    <property type="evidence" value="ECO:0000318"/>
    <property type="project" value="GO_Central"/>
</dbReference>
<dbReference type="GO" id="GO:0030141">
    <property type="term" value="C:secretory granule"/>
    <property type="evidence" value="ECO:0000318"/>
    <property type="project" value="GO_Central"/>
</dbReference>
<dbReference type="GO" id="GO:0046872">
    <property type="term" value="F:metal ion binding"/>
    <property type="evidence" value="ECO:0007669"/>
    <property type="project" value="UniProtKB-KW"/>
</dbReference>
<dbReference type="GO" id="GO:0004252">
    <property type="term" value="F:serine-type endopeptidase activity"/>
    <property type="evidence" value="ECO:0000318"/>
    <property type="project" value="GO_Central"/>
</dbReference>
<dbReference type="GO" id="GO:0008236">
    <property type="term" value="F:serine-type peptidase activity"/>
    <property type="evidence" value="ECO:0000314"/>
    <property type="project" value="RGD"/>
</dbReference>
<dbReference type="GO" id="GO:0003073">
    <property type="term" value="P:regulation of systemic arterial blood pressure"/>
    <property type="evidence" value="ECO:0000318"/>
    <property type="project" value="GO_Central"/>
</dbReference>
<dbReference type="GO" id="GO:0031638">
    <property type="term" value="P:zymogen activation"/>
    <property type="evidence" value="ECO:0000318"/>
    <property type="project" value="GO_Central"/>
</dbReference>
<dbReference type="CDD" id="cd00190">
    <property type="entry name" value="Tryp_SPc"/>
    <property type="match status" value="1"/>
</dbReference>
<dbReference type="FunFam" id="2.40.10.10:FF:000032">
    <property type="entry name" value="Kallikrein 1-related peptidase C9"/>
    <property type="match status" value="1"/>
</dbReference>
<dbReference type="FunFam" id="2.40.10.10:FF:000042">
    <property type="entry name" value="Kallikrein 1-related peptidase C9"/>
    <property type="match status" value="1"/>
</dbReference>
<dbReference type="Gene3D" id="2.40.10.10">
    <property type="entry name" value="Trypsin-like serine proteases"/>
    <property type="match status" value="2"/>
</dbReference>
<dbReference type="InterPro" id="IPR009003">
    <property type="entry name" value="Peptidase_S1_PA"/>
</dbReference>
<dbReference type="InterPro" id="IPR043504">
    <property type="entry name" value="Peptidase_S1_PA_chymotrypsin"/>
</dbReference>
<dbReference type="InterPro" id="IPR001314">
    <property type="entry name" value="Peptidase_S1A"/>
</dbReference>
<dbReference type="InterPro" id="IPR001254">
    <property type="entry name" value="Trypsin_dom"/>
</dbReference>
<dbReference type="InterPro" id="IPR018114">
    <property type="entry name" value="TRYPSIN_HIS"/>
</dbReference>
<dbReference type="InterPro" id="IPR033116">
    <property type="entry name" value="TRYPSIN_SER"/>
</dbReference>
<dbReference type="PANTHER" id="PTHR24271:SF47">
    <property type="entry name" value="KALLIKREIN-1"/>
    <property type="match status" value="1"/>
</dbReference>
<dbReference type="PANTHER" id="PTHR24271">
    <property type="entry name" value="KALLIKREIN-RELATED"/>
    <property type="match status" value="1"/>
</dbReference>
<dbReference type="Pfam" id="PF00089">
    <property type="entry name" value="Trypsin"/>
    <property type="match status" value="1"/>
</dbReference>
<dbReference type="PRINTS" id="PR00722">
    <property type="entry name" value="CHYMOTRYPSIN"/>
</dbReference>
<dbReference type="SMART" id="SM00020">
    <property type="entry name" value="Tryp_SPc"/>
    <property type="match status" value="1"/>
</dbReference>
<dbReference type="SUPFAM" id="SSF50494">
    <property type="entry name" value="Trypsin-like serine proteases"/>
    <property type="match status" value="1"/>
</dbReference>
<dbReference type="PROSITE" id="PS50240">
    <property type="entry name" value="TRYPSIN_DOM"/>
    <property type="match status" value="1"/>
</dbReference>
<dbReference type="PROSITE" id="PS00134">
    <property type="entry name" value="TRYPSIN_HIS"/>
    <property type="match status" value="1"/>
</dbReference>
<dbReference type="PROSITE" id="PS00135">
    <property type="entry name" value="TRYPSIN_SER"/>
    <property type="match status" value="1"/>
</dbReference>
<protein>
    <recommendedName>
        <fullName>Tonin</fullName>
        <ecNumber>3.4.21.35</ecNumber>
    </recommendedName>
    <alternativeName>
        <fullName>Esterase 1</fullName>
    </alternativeName>
    <alternativeName>
        <fullName>Glandular kallikrein-2</fullName>
        <shortName>rGK-2</shortName>
    </alternativeName>
    <alternativeName>
        <fullName>RSKG-5</fullName>
    </alternativeName>
    <alternativeName>
        <fullName>S2 kallikrein</fullName>
    </alternativeName>
</protein>
<accession>P00759</accession>
<gene>
    <name type="primary">Klk2</name>
    <name type="synonym">Klk-2</name>
    <name type="synonym">Ton</name>
</gene>
<reference key="1">
    <citation type="journal article" date="1985" name="Biochemistry">
        <title>Kallikrein-related mRNAs of the rat submaxillary gland: nucleotide sequences of four distinct types including tonin.</title>
        <authorList>
            <person name="Ashley P.L."/>
            <person name="MacDonald R.J."/>
        </authorList>
    </citation>
    <scope>NUCLEOTIDE SEQUENCE [MRNA]</scope>
</reference>
<reference key="2">
    <citation type="journal article" date="1989" name="J. Biol. Chem.">
        <title>Organization and expression of the rat kallikrein gene family.</title>
        <authorList>
            <person name="Wines D.R."/>
            <person name="Brady J.M."/>
            <person name="Pritchett D.B."/>
            <person name="Roberts J.L."/>
            <person name="MacDonald R.J."/>
        </authorList>
    </citation>
    <scope>NUCLEOTIDE SEQUENCE [GENOMIC DNA]</scope>
</reference>
<reference key="3">
    <citation type="journal article" date="1989" name="Biochemistry">
        <title>Characterization of genes encoding rat tonin and a kallikrein-like serine protease.</title>
        <authorList>
            <person name="Shai S.Y."/>
            <person name="Woodley-Miller C."/>
            <person name="Chao J."/>
            <person name="Chao L."/>
        </authorList>
    </citation>
    <scope>NUCLEOTIDE SEQUENCE [GENOMIC DNA]</scope>
</reference>
<reference key="4">
    <citation type="journal article" date="1987" name="Biochem. Cell Biol.">
        <title>The complete amino acid sequence of rat submaxillary gland tonin does contain the aspartic acid at the active site: confirmation by protein sequence analysis.</title>
        <authorList>
            <person name="Lazure C."/>
            <person name="Leduc R."/>
            <person name="Seidah N.G."/>
            <person name="Thibault G."/>
            <person name="Genest J."/>
            <person name="Chretien M."/>
        </authorList>
    </citation>
    <scope>PROTEIN SEQUENCE OF 25-259</scope>
</reference>
<reference key="5">
    <citation type="journal article" date="1984" name="Nature">
        <title>Amino acid sequence of rat submaxillary tonin reveals similarities to serine proteases.</title>
        <authorList>
            <person name="Lazure C."/>
            <person name="Leduc R."/>
            <person name="Seidah N.G."/>
            <person name="Thibault G."/>
            <person name="Genest J."/>
            <person name="Chretien M."/>
        </authorList>
    </citation>
    <scope>PROTEIN SEQUENCE OF 25-103 AND 120-259</scope>
</reference>
<reference key="6">
    <citation type="journal article" date="1990" name="Biochem. Biophys. Res. Commun.">
        <title>Observation of tissue prokallikrein activation by some serine proteases, arginine esterases in rat submandibular gland.</title>
        <authorList>
            <person name="Kamada M."/>
            <person name="Furuhata N."/>
            <person name="Yamaguchi T."/>
            <person name="Ikekita M."/>
            <person name="Kizuki K."/>
            <person name="Moriya H."/>
        </authorList>
    </citation>
    <scope>PROTEIN SEQUENCE OF 25-34</scope>
</reference>
<reference key="7">
    <citation type="journal article" date="1992" name="J. Biol. Chem.">
        <title>Protein products of the rat kallikrein gene family. Substrate specificities of kallikrein rK2 (tonin) and kallikrein rK9.</title>
        <authorList>
            <person name="Moreau T."/>
            <person name="Brillard-Bourdet M."/>
            <person name="Bouhnik J."/>
            <person name="Gauthier F."/>
        </authorList>
    </citation>
    <scope>PROTEIN SEQUENCE OF 25-50</scope>
    <scope>CHARACTERIZATION</scope>
</reference>
<reference key="8">
    <citation type="journal article" date="1987" name="J. Mol. Biol.">
        <title>Rat submaxillary gland serine protease, tonin. Structure solution and refinement at 1.8-A resolution.</title>
        <authorList>
            <person name="Fujinaga M."/>
            <person name="James M.N.G."/>
        </authorList>
    </citation>
    <scope>X-RAY CRYSTALLOGRAPHY (1.8 ANGSTROMS)</scope>
</reference>
<comment type="function">
    <text>This protein has both trypsin- and chymotrypsin-like activities, being able to release angiotensin II from angiotensin I or angiotensinogen.</text>
</comment>
<comment type="catalytic activity">
    <reaction>
        <text>Preferential cleavage of Arg-|-Xaa bonds in small molecule substrates. Highly selective action to release kallidin (lysyl-bradykinin) from kininogen involves hydrolysis of Met-|-Xaa or Leu-|-Xaa.</text>
        <dbReference type="EC" id="3.4.21.35"/>
    </reaction>
</comment>
<comment type="cofactor">
    <cofactor>
        <name>Zn(2+)</name>
        <dbReference type="ChEBI" id="CHEBI:29105"/>
    </cofactor>
    <text>Binds 1 zinc ion per subunit.</text>
</comment>
<comment type="subunit">
    <text>Monomer.</text>
</comment>
<comment type="tissue specificity">
    <text>Found in submaxillary gland.</text>
</comment>
<comment type="similarity">
    <text evidence="1">Belongs to the peptidase S1 family. Kallikrein subfamily.</text>
</comment>
<feature type="signal peptide">
    <location>
        <begin position="1"/>
        <end position="18"/>
    </location>
</feature>
<feature type="propeptide" id="PRO_0000028003" description="Activation peptide" evidence="2 3 4 5">
    <location>
        <begin position="19"/>
        <end position="24"/>
    </location>
</feature>
<feature type="chain" id="PRO_0000028004" description="Tonin">
    <location>
        <begin position="25"/>
        <end position="259"/>
    </location>
</feature>
<feature type="domain" description="Peptidase S1" evidence="1">
    <location>
        <begin position="25"/>
        <end position="256"/>
    </location>
</feature>
<feature type="active site" description="Charge relay system">
    <location>
        <position position="63"/>
    </location>
</feature>
<feature type="active site" description="Charge relay system">
    <location>
        <position position="118"/>
    </location>
</feature>
<feature type="active site" description="Charge relay system">
    <location>
        <position position="211"/>
    </location>
</feature>
<feature type="binding site">
    <location>
        <position position="63"/>
    </location>
    <ligand>
        <name>Zn(2+)</name>
        <dbReference type="ChEBI" id="CHEBI:29105"/>
    </ligand>
</feature>
<feature type="binding site">
    <location>
        <position position="113"/>
    </location>
    <ligand>
        <name>Zn(2+)</name>
        <dbReference type="ChEBI" id="CHEBI:29105"/>
    </ligand>
</feature>
<feature type="binding site">
    <location>
        <position position="115"/>
    </location>
    <ligand>
        <name>Zn(2+)</name>
        <dbReference type="ChEBI" id="CHEBI:29105"/>
    </ligand>
</feature>
<feature type="glycosylation site" description="N-linked (GlcNAc...) asparagine" evidence="4">
    <location>
        <position position="106"/>
    </location>
</feature>
<feature type="glycosylation site" description="N-linked (GlcNAc...) asparagine" evidence="4">
    <location>
        <position position="189"/>
    </location>
</feature>
<feature type="disulfide bond">
    <location>
        <begin position="31"/>
        <end position="171"/>
    </location>
</feature>
<feature type="disulfide bond">
    <location>
        <begin position="48"/>
        <end position="64"/>
    </location>
</feature>
<feature type="disulfide bond">
    <location>
        <begin position="150"/>
        <end position="217"/>
    </location>
</feature>
<feature type="disulfide bond">
    <location>
        <begin position="182"/>
        <end position="196"/>
    </location>
</feature>
<feature type="disulfide bond">
    <location>
        <begin position="207"/>
        <end position="232"/>
    </location>
</feature>
<feature type="strand" evidence="6">
    <location>
        <begin position="39"/>
        <end position="54"/>
    </location>
</feature>
<feature type="strand" evidence="6">
    <location>
        <begin position="57"/>
        <end position="60"/>
    </location>
</feature>
<feature type="helix" evidence="6">
    <location>
        <begin position="62"/>
        <end position="64"/>
    </location>
</feature>
<feature type="strand" evidence="6">
    <location>
        <begin position="70"/>
        <end position="74"/>
    </location>
</feature>
<feature type="strand" evidence="6">
    <location>
        <begin position="86"/>
        <end position="88"/>
    </location>
</feature>
<feature type="strand" evidence="6">
    <location>
        <begin position="90"/>
        <end position="95"/>
    </location>
</feature>
<feature type="strand" evidence="6">
    <location>
        <begin position="120"/>
        <end position="126"/>
    </location>
</feature>
<feature type="strand" evidence="6">
    <location>
        <begin position="149"/>
        <end position="156"/>
    </location>
</feature>
<feature type="strand" evidence="6">
    <location>
        <begin position="158"/>
        <end position="162"/>
    </location>
</feature>
<feature type="strand" evidence="6">
    <location>
        <begin position="170"/>
        <end position="177"/>
    </location>
</feature>
<feature type="helix" evidence="6">
    <location>
        <begin position="179"/>
        <end position="181"/>
    </location>
</feature>
<feature type="helix" evidence="6">
    <location>
        <begin position="183"/>
        <end position="186"/>
    </location>
</feature>
<feature type="helix" evidence="6">
    <location>
        <begin position="190"/>
        <end position="193"/>
    </location>
</feature>
<feature type="strand" evidence="6">
    <location>
        <begin position="194"/>
        <end position="198"/>
    </location>
</feature>
<feature type="strand" evidence="6">
    <location>
        <begin position="214"/>
        <end position="217"/>
    </location>
</feature>
<feature type="strand" evidence="6">
    <location>
        <begin position="220"/>
        <end position="225"/>
    </location>
</feature>
<feature type="strand" evidence="6">
    <location>
        <begin position="239"/>
        <end position="243"/>
    </location>
</feature>
<feature type="helix" evidence="6">
    <location>
        <begin position="244"/>
        <end position="247"/>
    </location>
</feature>
<feature type="helix" evidence="6">
    <location>
        <begin position="248"/>
        <end position="257"/>
    </location>
</feature>
<organism>
    <name type="scientific">Rattus norvegicus</name>
    <name type="common">Rat</name>
    <dbReference type="NCBI Taxonomy" id="10116"/>
    <lineage>
        <taxon>Eukaryota</taxon>
        <taxon>Metazoa</taxon>
        <taxon>Chordata</taxon>
        <taxon>Craniata</taxon>
        <taxon>Vertebrata</taxon>
        <taxon>Euteleostomi</taxon>
        <taxon>Mammalia</taxon>
        <taxon>Eutheria</taxon>
        <taxon>Euarchontoglires</taxon>
        <taxon>Glires</taxon>
        <taxon>Rodentia</taxon>
        <taxon>Myomorpha</taxon>
        <taxon>Muroidea</taxon>
        <taxon>Muridae</taxon>
        <taxon>Murinae</taxon>
        <taxon>Rattus</taxon>
    </lineage>
</organism>
<evidence type="ECO:0000255" key="1">
    <source>
        <dbReference type="PROSITE-ProRule" id="PRU00274"/>
    </source>
</evidence>
<evidence type="ECO:0000269" key="2">
    <source>
    </source>
</evidence>
<evidence type="ECO:0000269" key="3">
    <source>
    </source>
</evidence>
<evidence type="ECO:0000269" key="4">
    <source>
    </source>
</evidence>
<evidence type="ECO:0000269" key="5">
    <source>
    </source>
</evidence>
<evidence type="ECO:0007829" key="6">
    <source>
        <dbReference type="PDB" id="1TON"/>
    </source>
</evidence>
<proteinExistence type="evidence at protein level"/>